<keyword id="KW-0002">3D-structure</keyword>
<keyword id="KW-0025">Alternative splicing</keyword>
<keyword id="KW-0106">Calcium</keyword>
<keyword id="KW-0217">Developmental protein</keyword>
<keyword id="KW-0225">Disease variant</keyword>
<keyword id="KW-1015">Disulfide bond</keyword>
<keyword id="KW-0245">EGF-like domain</keyword>
<keyword id="KW-0325">Glycoprotein</keyword>
<keyword id="KW-0947">Limb-girdle muscular dystrophy</keyword>
<keyword id="KW-0472">Membrane</keyword>
<keyword id="KW-0914">Notch signaling pathway</keyword>
<keyword id="KW-0597">Phosphoprotein</keyword>
<keyword id="KW-1267">Proteomics identification</keyword>
<keyword id="KW-1185">Reference proteome</keyword>
<keyword id="KW-0677">Repeat</keyword>
<keyword id="KW-0732">Signal</keyword>
<keyword id="KW-0812">Transmembrane</keyword>
<keyword id="KW-1133">Transmembrane helix</keyword>
<organism>
    <name type="scientific">Homo sapiens</name>
    <name type="common">Human</name>
    <dbReference type="NCBI Taxonomy" id="9606"/>
    <lineage>
        <taxon>Eukaryota</taxon>
        <taxon>Metazoa</taxon>
        <taxon>Chordata</taxon>
        <taxon>Craniata</taxon>
        <taxon>Vertebrata</taxon>
        <taxon>Euteleostomi</taxon>
        <taxon>Mammalia</taxon>
        <taxon>Eutheria</taxon>
        <taxon>Euarchontoglires</taxon>
        <taxon>Primates</taxon>
        <taxon>Haplorrhini</taxon>
        <taxon>Catarrhini</taxon>
        <taxon>Hominidae</taxon>
        <taxon>Homo</taxon>
    </lineage>
</organism>
<gene>
    <name type="primary">JAG2</name>
</gene>
<comment type="function">
    <text evidence="1">Putative Notch ligand involved in the mediation of Notch signaling. Involved in limb development (By similarity).</text>
</comment>
<comment type="interaction">
    <interactant intactId="EBI-946223">
        <id>Q9Y219</id>
    </interactant>
    <interactant intactId="EBI-946212">
        <id>Q5VTD9</id>
        <label>GFI1B</label>
    </interactant>
    <organismsDiffer>false</organismsDiffer>
    <experiments>2</experiments>
</comment>
<comment type="subcellular location">
    <subcellularLocation>
        <location>Membrane</location>
        <topology>Single-pass type I membrane protein</topology>
    </subcellularLocation>
</comment>
<comment type="alternative products">
    <event type="alternative splicing"/>
    <isoform>
        <id>Q9Y219-1</id>
        <name>Long</name>
        <sequence type="displayed"/>
    </isoform>
    <isoform>
        <id>Q9Y219-2</id>
        <name>Short</name>
        <name>HJAG2.del-E6</name>
        <sequence type="described" ref="VSP_001395"/>
    </isoform>
</comment>
<comment type="tissue specificity">
    <text>Expressed in heart, placenta and skeletal muscle and to a lesser extent in pancreas. Very low expression in brain, lung, liver and kidney.</text>
</comment>
<comment type="disease" evidence="9">
    <disease id="DI-06247">
        <name>Muscular dystrophy, limb-girdle, autosomal recessive 27</name>
        <acronym>LGMDR27</acronym>
        <description>An autosomal recessive muscular disorder characterized by progressive muscle weakness most prominent in the proximal lower limb and axial muscles, and resulting in walking difficulty or loss of ambulation. Additional more variable features include neck muscle weakness, scoliosis, and joint contractures. Some affected individuals manifest impaired intellectual development or speech delay, cardiomyopathy, and cardiac arrhythmia. Muscle biopsy shows non-specific dystrophic changes.</description>
        <dbReference type="MIM" id="619566"/>
    </disease>
    <text>The disease is caused by variants affecting the gene represented in this entry.</text>
</comment>
<comment type="online information" name="Atlas of Genetics and Cytogenetics in Oncology and Haematology">
    <link uri="https://atlasgeneticsoncology.org/gene/41030/JAG2"/>
</comment>
<sequence length="1238" mass="133367">MRAQGRGRLPRRLLLLLALWVQAARPMGYFELQLSALRNVNGELLSGACCDGDGRTTRAGGCGHDECDTYVRVCLKEYQAKVTPTGPCSYGHGATPVLGGNSFYLPPAGAAGDRARARARAGGDQDPGLVVIPFQFAWPRSFTLIVEAWDWDNDTTPNEELLIERVSHAGMINPEDRWKSLHFSGHVAHLELQIRVRCDENYYSATCNKFCRPRNDFFGHYTCDQYGNKACMDGWMGKECKEAVCKQGCNLLHGGCTVPGECRCSYGWQGRFCDECVPYPGCVHGSCVEPWQCNCETNWGGLLCDKDLNYCGSHHPCTNGGTCINAEPDQYRCTCPDGYSGRNCEKAEHACTSNPCANGGSCHEVPSGFECHCPSGWSGPTCALDIDECASNPCAAGGTCVDQVDGFECICPEQWVGATCQLDANECEGKPCLNAFSCKNLIGGYYCDCIPGWKGINCHINVNDCRGQCQHGGTCKDLVNGYQCVCPRGFGGRHCELERDECASSPCHSGGLCEDLADGFHCHCPQGFSGPLCEVDVDLCEPSPCRNGARCYNLEGDYYCACPDDFGGKNCSVPREPCPGGACRVIDGCGSDAGPGMPGTAASGVCGPHGRCVSQPGGNFSCICDSGFTGTYCHENIDDCLGQPCRNGGTCIDEVDAFRCFCPSGWEGELCDTNPNDCLPDPCHSRGRCYDLVNDFYCACDDGWKGKTCHSREFQCDAYTCSNGGTCYDSGDTFRCACPPGWKGSTCAVAKNSSCLPNPCVNGGTCVGSGASFSCICRDGWEGRTCTHNTNDCNPLPCYNGGICVDGVNWFRCECAPGFAGPDCRINIDECQSSPCAYGATCVDEINGYRCSCPPGRAGPRCQEVIGFGRSCWSRGTPFPHGSSWVEDCNSCRCLDGRRDCSKVWCGWKPCLLAGQPEALSAQCPLGQRCLEKAPGQCLRPPCEAWGECGAEEPPSTPCLPRSGHLDNNCARLTLHFNRDHVPQGTTVGAICSGIRSLPATRAVARDRLLVLLCDRASSGASAVEVAVSFSPARDLPDSSLIQGAAHAIVAAITQRGNSSLLLAVTEVKVETVVTGGSSTGLLVPVLCGAFSVLWLACVVLCVWWTRKRRKERERSRLPREESANNQWAPLNPIRNPIERPGGHKDVLYQCKNFTPPPRRADEALPGPAGHAAVREDEEDEDLGRGEEDSLEAEKFLSHKFTKDPGRSPGRPAHWASGPKVDNRAVRSINEARYAGKE</sequence>
<proteinExistence type="evidence at protein level"/>
<feature type="signal peptide" evidence="2">
    <location>
        <begin position="1"/>
        <end position="23"/>
    </location>
</feature>
<feature type="chain" id="PRO_0000007629" description="Protein jagged-2">
    <location>
        <begin position="24"/>
        <end position="1238"/>
    </location>
</feature>
<feature type="topological domain" description="Extracellular" evidence="2">
    <location>
        <begin position="27"/>
        <end position="1080"/>
    </location>
</feature>
<feature type="transmembrane region" description="Helical" evidence="2">
    <location>
        <begin position="1081"/>
        <end position="1101"/>
    </location>
</feature>
<feature type="topological domain" description="Cytoplasmic" evidence="2">
    <location>
        <begin position="1102"/>
        <end position="1238"/>
    </location>
</feature>
<feature type="domain" description="DSL" evidence="5">
    <location>
        <begin position="196"/>
        <end position="240"/>
    </location>
</feature>
<feature type="domain" description="EGF-like 1" evidence="3">
    <location>
        <begin position="241"/>
        <end position="274"/>
    </location>
</feature>
<feature type="domain" description="EGF-like 2; atypical" evidence="3">
    <location>
        <begin position="275"/>
        <end position="305"/>
    </location>
</feature>
<feature type="domain" description="EGF-like 3" evidence="3">
    <location>
        <begin position="307"/>
        <end position="345"/>
    </location>
</feature>
<feature type="domain" description="EGF-like 4" evidence="3">
    <location>
        <begin position="347"/>
        <end position="383"/>
    </location>
</feature>
<feature type="domain" description="EGF-like 5; calcium-binding" evidence="3">
    <location>
        <begin position="385"/>
        <end position="421"/>
    </location>
</feature>
<feature type="domain" description="EGF-like 6; calcium-binding" evidence="3">
    <location>
        <begin position="423"/>
        <end position="459"/>
    </location>
</feature>
<feature type="domain" description="EGF-like 7; calcium-binding" evidence="3">
    <location>
        <begin position="461"/>
        <end position="496"/>
    </location>
</feature>
<feature type="domain" description="EGF-like 8" evidence="3">
    <location>
        <begin position="498"/>
        <end position="534"/>
    </location>
</feature>
<feature type="domain" description="EGF-like 9" evidence="3">
    <location>
        <begin position="536"/>
        <end position="572"/>
    </location>
</feature>
<feature type="domain" description="EGF-like 10; atypical" evidence="3">
    <location>
        <begin position="574"/>
        <end position="634"/>
    </location>
</feature>
<feature type="domain" description="EGF-like 11; calcium-binding" evidence="3">
    <location>
        <begin position="636"/>
        <end position="672"/>
    </location>
</feature>
<feature type="domain" description="EGF-like 12; calcium-binding" evidence="3">
    <location>
        <begin position="674"/>
        <end position="710"/>
    </location>
</feature>
<feature type="domain" description="EGF-like 13" evidence="3">
    <location>
        <begin position="712"/>
        <end position="748"/>
    </location>
</feature>
<feature type="domain" description="EGF-like 14" evidence="3">
    <location>
        <begin position="751"/>
        <end position="787"/>
    </location>
</feature>
<feature type="domain" description="EGF-like 15; calcium-binding" evidence="3">
    <location>
        <begin position="789"/>
        <end position="825"/>
    </location>
</feature>
<feature type="domain" description="EGF-like 16; calcium-binding" evidence="3">
    <location>
        <begin position="827"/>
        <end position="863"/>
    </location>
</feature>
<feature type="domain" description="VWFC" evidence="4">
    <location>
        <begin position="870"/>
        <end position="944"/>
    </location>
</feature>
<feature type="region of interest" description="Disordered" evidence="6">
    <location>
        <begin position="1114"/>
        <end position="1139"/>
    </location>
</feature>
<feature type="region of interest" description="Disordered" evidence="6">
    <location>
        <begin position="1156"/>
        <end position="1238"/>
    </location>
</feature>
<feature type="compositionally biased region" description="Basic and acidic residues" evidence="6">
    <location>
        <begin position="1114"/>
        <end position="1123"/>
    </location>
</feature>
<feature type="compositionally biased region" description="Basic and acidic residues" evidence="6">
    <location>
        <begin position="1183"/>
        <end position="1206"/>
    </location>
</feature>
<feature type="modified residue" description="Phosphoserine" evidence="13">
    <location>
        <position position="1123"/>
    </location>
</feature>
<feature type="glycosylation site" description="N-linked (GlcNAc...) asparagine" evidence="2">
    <location>
        <position position="153"/>
    </location>
</feature>
<feature type="glycosylation site" description="N-linked (GlcNAc...) asparagine" evidence="2">
    <location>
        <position position="570"/>
    </location>
</feature>
<feature type="glycosylation site" description="N-linked (GlcNAc...) asparagine" evidence="2">
    <location>
        <position position="619"/>
    </location>
</feature>
<feature type="glycosylation site" description="N-linked (GlcNAc...) asparagine" evidence="2">
    <location>
        <position position="752"/>
    </location>
</feature>
<feature type="glycosylation site" description="N-linked (GlcNAc...) asparagine" evidence="2">
    <location>
        <position position="1058"/>
    </location>
</feature>
<feature type="disulfide bond" evidence="1">
    <location>
        <begin position="198"/>
        <end position="207"/>
    </location>
</feature>
<feature type="disulfide bond" evidence="1">
    <location>
        <begin position="211"/>
        <end position="223"/>
    </location>
</feature>
<feature type="disulfide bond" evidence="1">
    <location>
        <begin position="231"/>
        <end position="240"/>
    </location>
</feature>
<feature type="disulfide bond" evidence="1">
    <location>
        <begin position="245"/>
        <end position="256"/>
    </location>
</feature>
<feature type="disulfide bond" evidence="1">
    <location>
        <begin position="249"/>
        <end position="262"/>
    </location>
</feature>
<feature type="disulfide bond" evidence="1">
    <location>
        <begin position="264"/>
        <end position="273"/>
    </location>
</feature>
<feature type="disulfide bond" evidence="1">
    <location>
        <begin position="276"/>
        <end position="287"/>
    </location>
</feature>
<feature type="disulfide bond" evidence="1">
    <location>
        <begin position="282"/>
        <end position="293"/>
    </location>
</feature>
<feature type="disulfide bond" evidence="1">
    <location>
        <begin position="295"/>
        <end position="304"/>
    </location>
</feature>
<feature type="disulfide bond" evidence="1">
    <location>
        <begin position="311"/>
        <end position="323"/>
    </location>
</feature>
<feature type="disulfide bond" evidence="1">
    <location>
        <begin position="317"/>
        <end position="333"/>
    </location>
</feature>
<feature type="disulfide bond" evidence="1">
    <location>
        <begin position="335"/>
        <end position="344"/>
    </location>
</feature>
<feature type="disulfide bond" evidence="1">
    <location>
        <begin position="351"/>
        <end position="362"/>
    </location>
</feature>
<feature type="disulfide bond" evidence="1">
    <location>
        <begin position="356"/>
        <end position="371"/>
    </location>
</feature>
<feature type="disulfide bond" evidence="1">
    <location>
        <begin position="373"/>
        <end position="382"/>
    </location>
</feature>
<feature type="disulfide bond" evidence="1">
    <location>
        <begin position="389"/>
        <end position="400"/>
    </location>
</feature>
<feature type="disulfide bond" evidence="1">
    <location>
        <begin position="394"/>
        <end position="409"/>
    </location>
</feature>
<feature type="disulfide bond" evidence="1">
    <location>
        <begin position="411"/>
        <end position="420"/>
    </location>
</feature>
<feature type="disulfide bond" evidence="1">
    <location>
        <begin position="427"/>
        <end position="438"/>
    </location>
</feature>
<feature type="disulfide bond" evidence="1">
    <location>
        <begin position="432"/>
        <end position="447"/>
    </location>
</feature>
<feature type="disulfide bond" evidence="1">
    <location>
        <begin position="449"/>
        <end position="458"/>
    </location>
</feature>
<feature type="disulfide bond" evidence="1">
    <location>
        <begin position="465"/>
        <end position="475"/>
    </location>
</feature>
<feature type="disulfide bond" evidence="1">
    <location>
        <begin position="469"/>
        <end position="484"/>
    </location>
</feature>
<feature type="disulfide bond" evidence="1">
    <location>
        <begin position="486"/>
        <end position="495"/>
    </location>
</feature>
<feature type="disulfide bond" evidence="1">
    <location>
        <begin position="502"/>
        <end position="513"/>
    </location>
</feature>
<feature type="disulfide bond" evidence="1">
    <location>
        <begin position="507"/>
        <end position="522"/>
    </location>
</feature>
<feature type="disulfide bond" evidence="1">
    <location>
        <begin position="524"/>
        <end position="533"/>
    </location>
</feature>
<feature type="disulfide bond" evidence="1">
    <location>
        <begin position="540"/>
        <end position="551"/>
    </location>
</feature>
<feature type="disulfide bond" evidence="1">
    <location>
        <begin position="545"/>
        <end position="560"/>
    </location>
</feature>
<feature type="disulfide bond" evidence="1">
    <location>
        <begin position="562"/>
        <end position="571"/>
    </location>
</feature>
<feature type="disulfide bond" evidence="2">
    <location>
        <begin position="589"/>
        <end position="612"/>
    </location>
</feature>
<feature type="disulfide bond" evidence="2">
    <location>
        <begin position="606"/>
        <end position="622"/>
    </location>
</feature>
<feature type="disulfide bond" evidence="1">
    <location>
        <begin position="624"/>
        <end position="633"/>
    </location>
</feature>
<feature type="disulfide bond" evidence="1">
    <location>
        <begin position="640"/>
        <end position="651"/>
    </location>
</feature>
<feature type="disulfide bond" evidence="1">
    <location>
        <begin position="645"/>
        <end position="660"/>
    </location>
</feature>
<feature type="disulfide bond" evidence="1">
    <location>
        <begin position="662"/>
        <end position="671"/>
    </location>
</feature>
<feature type="disulfide bond" evidence="1">
    <location>
        <begin position="678"/>
        <end position="689"/>
    </location>
</feature>
<feature type="disulfide bond" evidence="1">
    <location>
        <begin position="683"/>
        <end position="698"/>
    </location>
</feature>
<feature type="disulfide bond" evidence="1">
    <location>
        <begin position="700"/>
        <end position="709"/>
    </location>
</feature>
<feature type="disulfide bond" evidence="1">
    <location>
        <begin position="716"/>
        <end position="727"/>
    </location>
</feature>
<feature type="disulfide bond" evidence="1">
    <location>
        <begin position="721"/>
        <end position="736"/>
    </location>
</feature>
<feature type="disulfide bond" evidence="1">
    <location>
        <begin position="738"/>
        <end position="747"/>
    </location>
</feature>
<feature type="disulfide bond" evidence="1">
    <location>
        <begin position="755"/>
        <end position="766"/>
    </location>
</feature>
<feature type="disulfide bond" evidence="1">
    <location>
        <begin position="760"/>
        <end position="775"/>
    </location>
</feature>
<feature type="disulfide bond" evidence="1">
    <location>
        <begin position="777"/>
        <end position="786"/>
    </location>
</feature>
<feature type="disulfide bond" evidence="1">
    <location>
        <begin position="793"/>
        <end position="804"/>
    </location>
</feature>
<feature type="disulfide bond" evidence="1">
    <location>
        <begin position="798"/>
        <end position="813"/>
    </location>
</feature>
<feature type="disulfide bond" evidence="1">
    <location>
        <begin position="815"/>
        <end position="824"/>
    </location>
</feature>
<feature type="disulfide bond" evidence="1">
    <location>
        <begin position="831"/>
        <end position="842"/>
    </location>
</feature>
<feature type="disulfide bond" evidence="1">
    <location>
        <begin position="836"/>
        <end position="851"/>
    </location>
</feature>
<feature type="disulfide bond" evidence="1">
    <location>
        <begin position="853"/>
        <end position="862"/>
    </location>
</feature>
<feature type="splice variant" id="VSP_001395" description="In isoform Short." evidence="11">
    <location>
        <begin position="424"/>
        <end position="461"/>
    </location>
</feature>
<feature type="sequence variant" id="VAR_086389" description="In LGMDR27; uncertain significance; dbSNP:rs2141000225." evidence="9">
    <original>C</original>
    <variation>S</variation>
    <location>
        <position position="74"/>
    </location>
</feature>
<feature type="sequence variant" id="VAR_086390" description="In LGMDR27; uncertain significance; dbSNP:rs1555371784." evidence="9">
    <original>T</original>
    <variation>A</variation>
    <location>
        <position position="95"/>
    </location>
</feature>
<feature type="sequence variant" id="VAR_086391" description="In LGMDR27; uncertain significance; dbSNP:rs1888570315." evidence="9">
    <original>E</original>
    <variation>K</variation>
    <location>
        <position position="164"/>
    </location>
</feature>
<feature type="sequence variant" id="VAR_086392" description="In LGMDR27." evidence="9">
    <location>
        <begin position="165"/>
        <end position="1238"/>
    </location>
</feature>
<feature type="sequence variant" id="VAR_086393" description="In LGMDR27; uncertain significance; dbSNP:rs867073471." evidence="9">
    <original>A</original>
    <variation>D</variation>
    <location>
        <position position="243"/>
    </location>
</feature>
<feature type="sequence variant" id="VAR_086394" description="In LGMDR27; uncertain significance; dbSNP:rs753456166." evidence="9">
    <original>N</original>
    <variation>I</variation>
    <location>
        <position position="358"/>
    </location>
</feature>
<feature type="sequence variant" id="VAR_028113" description="In dbSNP:rs1057744." evidence="7 8 10">
    <original>E</original>
    <variation>K</variation>
    <location>
        <position position="501"/>
    </location>
</feature>
<feature type="sequence variant" id="VAR_048986" description="In dbSNP:rs9972231.">
    <original>D</original>
    <variation>N</variation>
    <location>
        <position position="538"/>
    </location>
</feature>
<feature type="sequence variant" id="VAR_086395" description="In LGMDR27; uncertain significance; dbSNP:rs200708284." evidence="9">
    <original>P</original>
    <variation>S</variation>
    <location>
        <position position="682"/>
    </location>
</feature>
<feature type="sequence variant" id="VAR_086396" description="In LGMDR27; uncertain significance." evidence="9">
    <location>
        <position position="702"/>
    </location>
</feature>
<feature type="sequence variant" id="VAR_086397" description="In LGMDR27; uncertain significance; dbSNP:rs764146079." evidence="9">
    <original>R</original>
    <variation>C</variation>
    <location>
        <position position="712"/>
    </location>
</feature>
<feature type="sequence variant" id="VAR_086398" description="In LGMDR27; uncertain significance; dbSNP:rs1459726266." evidence="9">
    <original>R</original>
    <variation>C</variation>
    <location>
        <position position="825"/>
    </location>
</feature>
<feature type="sequence variant" id="VAR_086399" description="In LGMDR27; dbSNP:rs781734780." evidence="9">
    <original>G</original>
    <variation>R</variation>
    <location>
        <position position="839"/>
    </location>
</feature>
<feature type="sequence variant" id="VAR_086400" description="In LGMDR27; uncertain significance; dbSNP:rs2140971458." evidence="9">
    <original>F</original>
    <variation>S</variation>
    <location>
        <position position="977"/>
    </location>
</feature>
<feature type="sequence conflict" description="In Ref. 1; AAB71189." evidence="12" ref="1">
    <original>RLPRR</original>
    <variation>AFPPA</variation>
    <location>
        <begin position="8"/>
        <end position="12"/>
    </location>
</feature>
<feature type="sequence conflict" description="In Ref. 1; AAB71189." evidence="12" ref="1">
    <original>A</original>
    <variation>P</variation>
    <location>
        <position position="119"/>
    </location>
</feature>
<feature type="sequence conflict" description="In Ref. 1; AAB71189." evidence="12" ref="1">
    <original>L</original>
    <variation>F</variation>
    <location>
        <position position="129"/>
    </location>
</feature>
<feature type="sequence conflict" description="In Ref. 4; CAA74706." evidence="12" ref="4">
    <original>L</original>
    <variation>SA</variation>
    <location>
        <position position="384"/>
    </location>
</feature>
<feature type="sequence conflict" description="In Ref. 1; AAB71189." evidence="12" ref="1">
    <original>ANE</original>
    <variation>VND</variation>
    <location>
        <begin position="424"/>
        <end position="426"/>
    </location>
</feature>
<feature type="sequence conflict" description="In Ref. 2; AAB61285." evidence="12" ref="2">
    <original>A</original>
    <variation>V</variation>
    <location>
        <position position="1235"/>
    </location>
</feature>
<feature type="strand" evidence="14">
    <location>
        <begin position="28"/>
        <end position="38"/>
    </location>
</feature>
<feature type="strand" evidence="14">
    <location>
        <begin position="47"/>
        <end position="49"/>
    </location>
</feature>
<feature type="strand" evidence="14">
    <location>
        <begin position="69"/>
        <end position="76"/>
    </location>
</feature>
<feature type="strand" evidence="14">
    <location>
        <begin position="91"/>
        <end position="94"/>
    </location>
</feature>
<feature type="strand" evidence="14">
    <location>
        <begin position="99"/>
        <end position="104"/>
    </location>
</feature>
<feature type="strand" evidence="15">
    <location>
        <begin position="110"/>
        <end position="112"/>
    </location>
</feature>
<feature type="helix" evidence="15">
    <location>
        <begin position="113"/>
        <end position="118"/>
    </location>
</feature>
<feature type="strand" evidence="14">
    <location>
        <begin position="129"/>
        <end position="134"/>
    </location>
</feature>
<feature type="strand" evidence="14">
    <location>
        <begin position="140"/>
        <end position="150"/>
    </location>
</feature>
<feature type="helix" evidence="14">
    <location>
        <begin position="159"/>
        <end position="161"/>
    </location>
</feature>
<feature type="strand" evidence="14">
    <location>
        <begin position="162"/>
        <end position="171"/>
    </location>
</feature>
<feature type="strand" evidence="14">
    <location>
        <begin position="174"/>
        <end position="176"/>
    </location>
</feature>
<feature type="strand" evidence="14">
    <location>
        <begin position="179"/>
        <end position="184"/>
    </location>
</feature>
<feature type="strand" evidence="14">
    <location>
        <begin position="189"/>
        <end position="198"/>
    </location>
</feature>
<feature type="strand" evidence="14">
    <location>
        <begin position="202"/>
        <end position="204"/>
    </location>
</feature>
<feature type="strand" evidence="14">
    <location>
        <begin position="214"/>
        <end position="216"/>
    </location>
</feature>
<feature type="strand" evidence="14">
    <location>
        <begin position="219"/>
        <end position="223"/>
    </location>
</feature>
<feature type="strand" evidence="14">
    <location>
        <begin position="229"/>
        <end position="231"/>
    </location>
</feature>
<feature type="strand" evidence="14">
    <location>
        <begin position="235"/>
        <end position="237"/>
    </location>
</feature>
<feature type="strand" evidence="14">
    <location>
        <begin position="253"/>
        <end position="255"/>
    </location>
</feature>
<feature type="strand" evidence="14">
    <location>
        <begin position="268"/>
        <end position="273"/>
    </location>
</feature>
<feature type="strand" evidence="14">
    <location>
        <begin position="284"/>
        <end position="286"/>
    </location>
</feature>
<feature type="turn" evidence="14">
    <location>
        <begin position="301"/>
        <end position="304"/>
    </location>
</feature>
<feature type="strand" evidence="15">
    <location>
        <begin position="306"/>
        <end position="314"/>
    </location>
</feature>
<feature type="strand" evidence="15">
    <location>
        <begin position="323"/>
        <end position="325"/>
    </location>
</feature>
<feature type="strand" evidence="15">
    <location>
        <begin position="331"/>
        <end position="333"/>
    </location>
</feature>
<reference key="1">
    <citation type="journal article" date="1997" name="Mol. Cell. Biol.">
        <title>Isolation and functional analysis of a cDNA for human Jagged2, a gene encoding a ligand for the Notch1 receptor.</title>
        <authorList>
            <person name="Luo B."/>
            <person name="Aster J.C."/>
            <person name="Hasserjian R.P."/>
            <person name="Kuo F."/>
            <person name="Sklar J."/>
        </authorList>
    </citation>
    <scope>NUCLEOTIDE SEQUENCE [MRNA] (ISOFORM LONG)</scope>
    <scope>VARIANT LYS-501</scope>
</reference>
<reference key="2">
    <citation type="journal article" date="1999" name="Am. J. Pathol.">
        <title>Human ligands of the Notch receptor.</title>
        <authorList>
            <person name="Gray G.E."/>
            <person name="Mann R.S."/>
            <person name="Mitsiadis E."/>
            <person name="Henrique D."/>
            <person name="Carcangiu M.-L."/>
            <person name="Banks A."/>
            <person name="Leiman J."/>
            <person name="Ward D."/>
            <person name="Ish-Horowitz D."/>
            <person name="Artavanis-Tsakonas S."/>
        </authorList>
    </citation>
    <scope>NUCLEOTIDE SEQUENCE [MRNA] (ISOFORM LONG)</scope>
    <scope>VARIANT LYS-501</scope>
    <source>
        <tissue>Fetal brain</tissue>
    </source>
</reference>
<reference key="3">
    <citation type="journal article" date="2000" name="Genomics">
        <title>Characterization, chromosomal localization, and the complete 30-kb DNA sequence of the human Jagged2 (JAG2) gene.</title>
        <authorList>
            <person name="Deng Y."/>
            <person name="Madan A."/>
            <person name="Banta A.B."/>
            <person name="Friedman C."/>
            <person name="Trask B.J."/>
            <person name="Hood L."/>
            <person name="Li L."/>
        </authorList>
    </citation>
    <scope>NUCLEOTIDE SEQUENCE [GENOMIC DNA / MRNA] (ISOFORMS LONG AND SHORT)</scope>
    <scope>VARIANT LYS-501</scope>
    <source>
        <tissue>Bone marrow</tissue>
    </source>
</reference>
<reference key="4">
    <citation type="journal article" date="1997" name="Mech. Dev.">
        <title>JAGGED2: a putative Notch ligand expressed in the apical ectodermal ridge and in sites of epithelial-mesenchymal interactions.</title>
        <authorList>
            <person name="Valsecchi C."/>
            <person name="Ghezzi C."/>
            <person name="Ballabio A."/>
            <person name="Rugarli E.I."/>
        </authorList>
    </citation>
    <scope>NUCLEOTIDE SEQUENCE [MRNA] OF 17-1238 (ISOFORM LONG)</scope>
    <source>
        <tissue>Heart</tissue>
    </source>
</reference>
<reference key="5">
    <citation type="journal article" date="2013" name="J. Proteome Res.">
        <title>Toward a comprehensive characterization of a human cancer cell phosphoproteome.</title>
        <authorList>
            <person name="Zhou H."/>
            <person name="Di Palma S."/>
            <person name="Preisinger C."/>
            <person name="Peng M."/>
            <person name="Polat A.N."/>
            <person name="Heck A.J."/>
            <person name="Mohammed S."/>
        </authorList>
    </citation>
    <scope>PHOSPHORYLATION [LARGE SCALE ANALYSIS] AT SER-1123</scope>
    <scope>IDENTIFICATION BY MASS SPECTROMETRY [LARGE SCALE ANALYSIS]</scope>
    <source>
        <tissue>Erythroleukemia</tissue>
    </source>
</reference>
<reference key="6">
    <citation type="journal article" date="2021" name="Am. J. Hum. Genet.">
        <title>A form of muscular dystrophy associated with pathogenic variants in JAG2.</title>
        <authorList>
            <person name="Coppens S."/>
            <person name="Barnard A.M."/>
            <person name="Puusepp S."/>
            <person name="Pajusalu S."/>
            <person name="Ounap K."/>
            <person name="Vargas-Franco D."/>
            <person name="Bruels C.C."/>
            <person name="Donkervoort S."/>
            <person name="Pais L."/>
            <person name="Chao K.R."/>
            <person name="Goodrich J.K."/>
            <person name="England E.M."/>
            <person name="Weisburd B."/>
            <person name="Ganesh V.S."/>
            <person name="Gudmundsson S."/>
            <person name="O'Donnell-Luria A."/>
            <person name="Nigul M."/>
            <person name="Ilves P."/>
            <person name="Mohassel P."/>
            <person name="Siddique T."/>
            <person name="Milone M."/>
            <person name="Nicolau S."/>
            <person name="Maroofian R."/>
            <person name="Houlden H."/>
            <person name="Hanna M.G."/>
            <person name="Quinlivan R."/>
            <person name="Beiraghi Toosi M."/>
            <person name="Ghayoor Karimiani E."/>
            <person name="Costagliola S."/>
            <person name="Deconinck N."/>
            <person name="Kadhim H."/>
            <person name="Macke E."/>
            <person name="Lanpher B.C."/>
            <person name="Klee E.W."/>
            <person name="Lusakowska A."/>
            <person name="Kostera-Pruszczyk A."/>
            <person name="Hahn A."/>
            <person name="Schrank B."/>
            <person name="Nishino I."/>
            <person name="Ogasawara M."/>
            <person name="El Sherif R."/>
            <person name="Stojkovic T."/>
            <person name="Nelson I."/>
            <person name="Bonne G."/>
            <person name="Cohen E."/>
            <person name="Boland-Auge A."/>
            <person name="Deleuze J.F."/>
            <person name="Meng Y."/>
            <person name="Toepf A."/>
            <person name="Vilain C."/>
            <person name="Pacak C.A."/>
            <person name="Rivera-Zengotita M.L."/>
            <person name="Boennemann C.G."/>
            <person name="Straub V."/>
            <person name="Handford P.A."/>
            <person name="Draper I."/>
            <person name="Walter G.A."/>
            <person name="Kang P.B."/>
        </authorList>
    </citation>
    <scope>VARIANTS LGMDR27 SER-74; ALA-95; LYS-164; 165-ARG--GLU-1238 DEL; ASP-243; ILE-358; SER-682; ASP-702 DEL; CYS-712; CYS-825; ARG-839 AND SER-977</scope>
    <scope>INVOLVEMENT IN LGMDR27</scope>
</reference>
<reference key="7">
    <citation type="journal article" date="2021" name="Am. J. Hum. Genet.">
        <authorList>
            <person name="Coppens S."/>
            <person name="Barnard A.M."/>
            <person name="Puusepp S."/>
            <person name="Pajusalu S."/>
            <person name="Ounap K."/>
            <person name="Vargas-Franco D."/>
            <person name="Bruels C.C."/>
            <person name="Donkervoort S."/>
            <person name="Pais L."/>
            <person name="Chao K.R."/>
            <person name="Goodrich J.K."/>
            <person name="England E.M."/>
            <person name="Weisburd B."/>
            <person name="Ganesh V.S."/>
            <person name="Gudmundsson S."/>
            <person name="O'Donnell-Luria A."/>
            <person name="Nigul M."/>
            <person name="Ilves P."/>
            <person name="Mohassel P."/>
            <person name="Siddique T."/>
            <person name="Milone M."/>
            <person name="Nicolau S."/>
            <person name="Maroofian R."/>
            <person name="Houlden H."/>
            <person name="Hanna M.G."/>
            <person name="Quinlivan R."/>
            <person name="Toosi M.B."/>
            <person name="Karimiani E.G."/>
            <person name="Costagliola S."/>
            <person name="Deconinck N."/>
            <person name="Kadhim H."/>
            <person name="Macke E."/>
            <person name="Lanpher B.C."/>
            <person name="Klee E.W."/>
            <person name="Lusakowska A."/>
            <person name="Kostera-Pruszczyk A."/>
            <person name="Hahn A."/>
            <person name="Schrank B."/>
            <person name="Nishino I."/>
            <person name="Ogasawara M."/>
            <person name="El Sherif R."/>
            <person name="Stojkovic T."/>
            <person name="Nelson I."/>
            <person name="Bonne G."/>
            <person name="Cohen E."/>
            <person name="Boland-Auge A."/>
            <person name="Deleuze J.F."/>
            <person name="Meng Y."/>
            <person name="Toepf A."/>
            <person name="Vilain C."/>
            <person name="Pacak C.A."/>
            <person name="Rivera-Zengotita M.L."/>
            <person name="Boennemann C.G."/>
            <person name="Straub V."/>
            <person name="Handford P.A."/>
            <person name="Draper I."/>
            <person name="Walter G.A."/>
            <person name="Kang P.B."/>
        </authorList>
    </citation>
    <scope>ERRATUM OF PUBMED:33861953</scope>
</reference>
<evidence type="ECO:0000250" key="1"/>
<evidence type="ECO:0000255" key="2"/>
<evidence type="ECO:0000255" key="3">
    <source>
        <dbReference type="PROSITE-ProRule" id="PRU00076"/>
    </source>
</evidence>
<evidence type="ECO:0000255" key="4">
    <source>
        <dbReference type="PROSITE-ProRule" id="PRU00220"/>
    </source>
</evidence>
<evidence type="ECO:0000255" key="5">
    <source>
        <dbReference type="PROSITE-ProRule" id="PRU00377"/>
    </source>
</evidence>
<evidence type="ECO:0000256" key="6">
    <source>
        <dbReference type="SAM" id="MobiDB-lite"/>
    </source>
</evidence>
<evidence type="ECO:0000269" key="7">
    <source>
    </source>
</evidence>
<evidence type="ECO:0000269" key="8">
    <source>
    </source>
</evidence>
<evidence type="ECO:0000269" key="9">
    <source>
    </source>
</evidence>
<evidence type="ECO:0000269" key="10">
    <source>
    </source>
</evidence>
<evidence type="ECO:0000303" key="11">
    <source>
    </source>
</evidence>
<evidence type="ECO:0000305" key="12"/>
<evidence type="ECO:0007744" key="13">
    <source>
    </source>
</evidence>
<evidence type="ECO:0007829" key="14">
    <source>
        <dbReference type="PDB" id="5MW5"/>
    </source>
</evidence>
<evidence type="ECO:0007829" key="15">
    <source>
        <dbReference type="PDB" id="5MW7"/>
    </source>
</evidence>
<name>JAG2_HUMAN</name>
<dbReference type="EMBL" id="AF020201">
    <property type="protein sequence ID" value="AAB71189.1"/>
    <property type="molecule type" value="mRNA"/>
</dbReference>
<dbReference type="EMBL" id="AF003521">
    <property type="protein sequence ID" value="AAB61285.1"/>
    <property type="molecule type" value="mRNA"/>
</dbReference>
<dbReference type="EMBL" id="AF029778">
    <property type="protein sequence ID" value="AAB84215.1"/>
    <property type="molecule type" value="mRNA"/>
</dbReference>
<dbReference type="EMBL" id="AF029779">
    <property type="protein sequence ID" value="AAB84216.1"/>
    <property type="molecule type" value="mRNA"/>
</dbReference>
<dbReference type="EMBL" id="AF111170">
    <property type="protein sequence ID" value="AAD15562.1"/>
    <property type="molecule type" value="Genomic_DNA"/>
</dbReference>
<dbReference type="EMBL" id="Y14330">
    <property type="protein sequence ID" value="CAA74706.1"/>
    <property type="molecule type" value="mRNA"/>
</dbReference>
<dbReference type="CCDS" id="CCDS9998.1">
    <molecule id="Q9Y219-1"/>
</dbReference>
<dbReference type="CCDS" id="CCDS9999.1">
    <molecule id="Q9Y219-2"/>
</dbReference>
<dbReference type="RefSeq" id="NP_002217.3">
    <molecule id="Q9Y219-1"/>
    <property type="nucleotide sequence ID" value="NM_002226.4"/>
</dbReference>
<dbReference type="RefSeq" id="NP_660142.1">
    <molecule id="Q9Y219-2"/>
    <property type="nucleotide sequence ID" value="NM_145159.3"/>
</dbReference>
<dbReference type="PDB" id="5MW5">
    <property type="method" value="X-ray"/>
    <property type="resolution" value="2.70 A"/>
    <property type="chains" value="A=27-309"/>
</dbReference>
<dbReference type="PDB" id="5MW7">
    <property type="method" value="X-ray"/>
    <property type="resolution" value="2.80 A"/>
    <property type="chains" value="A=27-348"/>
</dbReference>
<dbReference type="PDB" id="5MWF">
    <property type="method" value="X-ray"/>
    <property type="resolution" value="2.80 A"/>
    <property type="chains" value="A/B/C/D/E/F=27-309"/>
</dbReference>
<dbReference type="PDBsum" id="5MW5"/>
<dbReference type="PDBsum" id="5MW7"/>
<dbReference type="PDBsum" id="5MWF"/>
<dbReference type="SMR" id="Q9Y219"/>
<dbReference type="BioGRID" id="109918">
    <property type="interactions" value="153"/>
</dbReference>
<dbReference type="FunCoup" id="Q9Y219">
    <property type="interactions" value="874"/>
</dbReference>
<dbReference type="IntAct" id="Q9Y219">
    <property type="interactions" value="71"/>
</dbReference>
<dbReference type="MINT" id="Q9Y219"/>
<dbReference type="STRING" id="9606.ENSP00000328169"/>
<dbReference type="GlyCosmos" id="Q9Y219">
    <property type="glycosylation" value="5 sites, No reported glycans"/>
</dbReference>
<dbReference type="GlyGen" id="Q9Y219">
    <property type="glycosylation" value="7 sites, 2 N-linked glycans (2 sites)"/>
</dbReference>
<dbReference type="iPTMnet" id="Q9Y219"/>
<dbReference type="PhosphoSitePlus" id="Q9Y219"/>
<dbReference type="SwissPalm" id="Q9Y219"/>
<dbReference type="BioMuta" id="JAG2"/>
<dbReference type="DMDM" id="116242598"/>
<dbReference type="jPOST" id="Q9Y219"/>
<dbReference type="MassIVE" id="Q9Y219"/>
<dbReference type="PaxDb" id="9606-ENSP00000328169"/>
<dbReference type="PeptideAtlas" id="Q9Y219"/>
<dbReference type="ProteomicsDB" id="85595">
    <molecule id="Q9Y219-1"/>
</dbReference>
<dbReference type="ProteomicsDB" id="85596">
    <molecule id="Q9Y219-2"/>
</dbReference>
<dbReference type="ABCD" id="Q9Y219">
    <property type="antibodies" value="20 sequenced antibodies"/>
</dbReference>
<dbReference type="Antibodypedia" id="14930">
    <property type="antibodies" value="477 antibodies from 38 providers"/>
</dbReference>
<dbReference type="DNASU" id="3714"/>
<dbReference type="Ensembl" id="ENST00000331782.8">
    <molecule id="Q9Y219-1"/>
    <property type="protein sequence ID" value="ENSP00000328169.3"/>
    <property type="gene ID" value="ENSG00000184916.9"/>
</dbReference>
<dbReference type="Ensembl" id="ENST00000347004.2">
    <molecule id="Q9Y219-2"/>
    <property type="protein sequence ID" value="ENSP00000328566.2"/>
    <property type="gene ID" value="ENSG00000184916.9"/>
</dbReference>
<dbReference type="GeneID" id="3714"/>
<dbReference type="KEGG" id="hsa:3714"/>
<dbReference type="MANE-Select" id="ENST00000331782.8">
    <property type="protein sequence ID" value="ENSP00000328169.3"/>
    <property type="RefSeq nucleotide sequence ID" value="NM_002226.5"/>
    <property type="RefSeq protein sequence ID" value="NP_002217.3"/>
</dbReference>
<dbReference type="UCSC" id="uc001yqg.4">
    <molecule id="Q9Y219-1"/>
    <property type="organism name" value="human"/>
</dbReference>
<dbReference type="AGR" id="HGNC:6189"/>
<dbReference type="CTD" id="3714"/>
<dbReference type="DisGeNET" id="3714"/>
<dbReference type="GeneCards" id="JAG2"/>
<dbReference type="HGNC" id="HGNC:6189">
    <property type="gene designation" value="JAG2"/>
</dbReference>
<dbReference type="HPA" id="ENSG00000184916">
    <property type="expression patterns" value="Low tissue specificity"/>
</dbReference>
<dbReference type="MalaCards" id="JAG2"/>
<dbReference type="MIM" id="602570">
    <property type="type" value="gene"/>
</dbReference>
<dbReference type="MIM" id="619566">
    <property type="type" value="phenotype"/>
</dbReference>
<dbReference type="neXtProt" id="NX_Q9Y219"/>
<dbReference type="OpenTargets" id="ENSG00000184916"/>
<dbReference type="PharmGKB" id="PA29987"/>
<dbReference type="VEuPathDB" id="HostDB:ENSG00000184916"/>
<dbReference type="eggNOG" id="KOG1217">
    <property type="taxonomic scope" value="Eukaryota"/>
</dbReference>
<dbReference type="GeneTree" id="ENSGT00940000160944"/>
<dbReference type="HOGENOM" id="CLU_004732_0_0_1"/>
<dbReference type="InParanoid" id="Q9Y219"/>
<dbReference type="OMA" id="GSWVEDC"/>
<dbReference type="OrthoDB" id="283575at2759"/>
<dbReference type="PAN-GO" id="Q9Y219">
    <property type="GO annotations" value="1 GO annotation based on evolutionary models"/>
</dbReference>
<dbReference type="PhylomeDB" id="Q9Y219"/>
<dbReference type="TreeFam" id="TF351835"/>
<dbReference type="PathwayCommons" id="Q9Y219"/>
<dbReference type="Reactome" id="R-HSA-2122948">
    <property type="pathway name" value="Activated NOTCH1 Transmits Signal to the Nucleus"/>
</dbReference>
<dbReference type="Reactome" id="R-HSA-2644606">
    <property type="pathway name" value="Constitutive Signaling by NOTCH1 PEST Domain Mutants"/>
</dbReference>
<dbReference type="Reactome" id="R-HSA-2660826">
    <property type="pathway name" value="Constitutive Signaling by NOTCH1 t(7;9)(NOTCH1:M1580_K2555) Translocation Mutant"/>
</dbReference>
<dbReference type="Reactome" id="R-HSA-2691232">
    <property type="pathway name" value="Constitutive Signaling by NOTCH1 HD Domain Mutants"/>
</dbReference>
<dbReference type="Reactome" id="R-HSA-2894862">
    <property type="pathway name" value="Constitutive Signaling by NOTCH1 HD+PEST Domain Mutants"/>
</dbReference>
<dbReference type="Reactome" id="R-HSA-2979096">
    <property type="pathway name" value="NOTCH2 Activation and Transmission of Signal to the Nucleus"/>
</dbReference>
<dbReference type="Reactome" id="R-HSA-9013507">
    <property type="pathway name" value="NOTCH3 Activation and Transmission of Signal to the Nucleus"/>
</dbReference>
<dbReference type="SignaLink" id="Q9Y219"/>
<dbReference type="SIGNOR" id="Q9Y219"/>
<dbReference type="BioGRID-ORCS" id="3714">
    <property type="hits" value="15 hits in 1165 CRISPR screens"/>
</dbReference>
<dbReference type="ChiTaRS" id="JAG2">
    <property type="organism name" value="human"/>
</dbReference>
<dbReference type="GeneWiki" id="JAG2"/>
<dbReference type="GenomeRNAi" id="3714"/>
<dbReference type="Pharos" id="Q9Y219">
    <property type="development level" value="Tbio"/>
</dbReference>
<dbReference type="PRO" id="PR:Q9Y219"/>
<dbReference type="Proteomes" id="UP000005640">
    <property type="component" value="Chromosome 14"/>
</dbReference>
<dbReference type="RNAct" id="Q9Y219">
    <property type="molecule type" value="protein"/>
</dbReference>
<dbReference type="Bgee" id="ENSG00000184916">
    <property type="expression patterns" value="Expressed in nipple and 202 other cell types or tissues"/>
</dbReference>
<dbReference type="GO" id="GO:0005886">
    <property type="term" value="C:plasma membrane"/>
    <property type="evidence" value="ECO:0000250"/>
    <property type="project" value="UniProtKB"/>
</dbReference>
<dbReference type="GO" id="GO:0005509">
    <property type="term" value="F:calcium ion binding"/>
    <property type="evidence" value="ECO:0007669"/>
    <property type="project" value="InterPro"/>
</dbReference>
<dbReference type="GO" id="GO:0008083">
    <property type="term" value="F:growth factor activity"/>
    <property type="evidence" value="ECO:0000314"/>
    <property type="project" value="UniProtKB"/>
</dbReference>
<dbReference type="GO" id="GO:0005112">
    <property type="term" value="F:Notch binding"/>
    <property type="evidence" value="ECO:0000353"/>
    <property type="project" value="UniProtKB"/>
</dbReference>
<dbReference type="GO" id="GO:0009912">
    <property type="term" value="P:auditory receptor cell fate commitment"/>
    <property type="evidence" value="ECO:0000250"/>
    <property type="project" value="UniProtKB"/>
</dbReference>
<dbReference type="GO" id="GO:0030154">
    <property type="term" value="P:cell differentiation"/>
    <property type="evidence" value="ECO:0000314"/>
    <property type="project" value="UniProtKB"/>
</dbReference>
<dbReference type="GO" id="GO:1990134">
    <property type="term" value="P:epithelial cell apoptotic process involved in palatal shelf morphogenesis"/>
    <property type="evidence" value="ECO:0007669"/>
    <property type="project" value="Ensembl"/>
</dbReference>
<dbReference type="GO" id="GO:0042492">
    <property type="term" value="P:gamma-delta T cell differentiation"/>
    <property type="evidence" value="ECO:0007669"/>
    <property type="project" value="Ensembl"/>
</dbReference>
<dbReference type="GO" id="GO:0001701">
    <property type="term" value="P:in utero embryonic development"/>
    <property type="evidence" value="ECO:0007669"/>
    <property type="project" value="Ensembl"/>
</dbReference>
<dbReference type="GO" id="GO:0016331">
    <property type="term" value="P:morphogenesis of embryonic epithelium"/>
    <property type="evidence" value="ECO:0007669"/>
    <property type="project" value="Ensembl"/>
</dbReference>
<dbReference type="GO" id="GO:0007219">
    <property type="term" value="P:Notch signaling pathway"/>
    <property type="evidence" value="ECO:0000303"/>
    <property type="project" value="UniProtKB"/>
</dbReference>
<dbReference type="GO" id="GO:0042475">
    <property type="term" value="P:odontogenesis of dentin-containing tooth"/>
    <property type="evidence" value="ECO:0007669"/>
    <property type="project" value="Ensembl"/>
</dbReference>
<dbReference type="GO" id="GO:0045747">
    <property type="term" value="P:positive regulation of Notch signaling pathway"/>
    <property type="evidence" value="ECO:0000250"/>
    <property type="project" value="UniProtKB"/>
</dbReference>
<dbReference type="GO" id="GO:0030155">
    <property type="term" value="P:regulation of cell adhesion"/>
    <property type="evidence" value="ECO:0007669"/>
    <property type="project" value="Ensembl"/>
</dbReference>
<dbReference type="GO" id="GO:0042127">
    <property type="term" value="P:regulation of cell population proliferation"/>
    <property type="evidence" value="ECO:0000314"/>
    <property type="project" value="UniProtKB"/>
</dbReference>
<dbReference type="GO" id="GO:0003016">
    <property type="term" value="P:respiratory system process"/>
    <property type="evidence" value="ECO:0007669"/>
    <property type="project" value="Ensembl"/>
</dbReference>
<dbReference type="GO" id="GO:0001501">
    <property type="term" value="P:skeletal system development"/>
    <property type="evidence" value="ECO:0007669"/>
    <property type="project" value="Ensembl"/>
</dbReference>
<dbReference type="GO" id="GO:0007283">
    <property type="term" value="P:spermatogenesis"/>
    <property type="evidence" value="ECO:0000270"/>
    <property type="project" value="UniProtKB"/>
</dbReference>
<dbReference type="GO" id="GO:0030217">
    <property type="term" value="P:T cell differentiation"/>
    <property type="evidence" value="ECO:0000314"/>
    <property type="project" value="UniProtKB"/>
</dbReference>
<dbReference type="GO" id="GO:0045061">
    <property type="term" value="P:thymic T cell selection"/>
    <property type="evidence" value="ECO:0000314"/>
    <property type="project" value="UniProtKB"/>
</dbReference>
<dbReference type="CDD" id="cd00054">
    <property type="entry name" value="EGF_CA"/>
    <property type="match status" value="13"/>
</dbReference>
<dbReference type="FunFam" id="2.10.25.10:FF:000018">
    <property type="entry name" value="Delta-like 1"/>
    <property type="match status" value="1"/>
</dbReference>
<dbReference type="FunFam" id="2.10.25.10:FF:000007">
    <property type="entry name" value="Delta-like protein"/>
    <property type="match status" value="1"/>
</dbReference>
<dbReference type="FunFam" id="2.10.25.10:FF:000061">
    <property type="entry name" value="Delta-like protein"/>
    <property type="match status" value="2"/>
</dbReference>
<dbReference type="FunFam" id="2.10.25.10:FF:000117">
    <property type="entry name" value="Delta-like protein"/>
    <property type="match status" value="1"/>
</dbReference>
<dbReference type="FunFam" id="2.10.25.10:FF:000148">
    <property type="entry name" value="Delta-like protein"/>
    <property type="match status" value="1"/>
</dbReference>
<dbReference type="FunFam" id="2.10.25.10:FF:000310">
    <property type="entry name" value="Delta-like protein"/>
    <property type="match status" value="1"/>
</dbReference>
<dbReference type="FunFam" id="2.10.25.10:FF:000431">
    <property type="entry name" value="Delta-like protein"/>
    <property type="match status" value="1"/>
</dbReference>
<dbReference type="FunFam" id="2.10.25.10:FF:000445">
    <property type="entry name" value="Delta-like protein"/>
    <property type="match status" value="1"/>
</dbReference>
<dbReference type="FunFam" id="2.10.25.10:FF:000473">
    <property type="entry name" value="Delta-like protein"/>
    <property type="match status" value="1"/>
</dbReference>
<dbReference type="FunFam" id="2.10.25.10:FF:000824">
    <property type="entry name" value="Delta-like protein"/>
    <property type="match status" value="1"/>
</dbReference>
<dbReference type="FunFam" id="2.10.25.140:FF:000001">
    <property type="entry name" value="Delta-like protein"/>
    <property type="match status" value="1"/>
</dbReference>
<dbReference type="FunFam" id="2.60.40.3510:FF:000006">
    <property type="entry name" value="Delta-like protein"/>
    <property type="match status" value="1"/>
</dbReference>
<dbReference type="FunFam" id="2.10.25.10:FF:000095">
    <property type="entry name" value="Notch, isoform B"/>
    <property type="match status" value="1"/>
</dbReference>
<dbReference type="FunFam" id="2.10.25.10:FF:000143">
    <property type="entry name" value="Protein crumbs 1"/>
    <property type="match status" value="1"/>
</dbReference>
<dbReference type="FunFam" id="2.10.25.10:FF:000146">
    <property type="entry name" value="Putative neurogenic locus notch"/>
    <property type="match status" value="1"/>
</dbReference>
<dbReference type="FunFam" id="2.10.25.10:FF:000309">
    <property type="entry name" value="Uncharacterized protein, isoform A"/>
    <property type="match status" value="1"/>
</dbReference>
<dbReference type="Gene3D" id="2.10.25.140">
    <property type="match status" value="1"/>
</dbReference>
<dbReference type="Gene3D" id="2.60.40.3510">
    <property type="match status" value="1"/>
</dbReference>
<dbReference type="Gene3D" id="2.10.25.10">
    <property type="entry name" value="Laminin"/>
    <property type="match status" value="15"/>
</dbReference>
<dbReference type="InterPro" id="IPR001774">
    <property type="entry name" value="DSL"/>
</dbReference>
<dbReference type="InterPro" id="IPR001881">
    <property type="entry name" value="EGF-like_Ca-bd_dom"/>
</dbReference>
<dbReference type="InterPro" id="IPR013032">
    <property type="entry name" value="EGF-like_CS"/>
</dbReference>
<dbReference type="InterPro" id="IPR000742">
    <property type="entry name" value="EGF-like_dom"/>
</dbReference>
<dbReference type="InterPro" id="IPR000152">
    <property type="entry name" value="EGF-type_Asp/Asn_hydroxyl_site"/>
</dbReference>
<dbReference type="InterPro" id="IPR018097">
    <property type="entry name" value="EGF_Ca-bd_CS"/>
</dbReference>
<dbReference type="InterPro" id="IPR009030">
    <property type="entry name" value="Growth_fac_rcpt_cys_sf"/>
</dbReference>
<dbReference type="InterPro" id="IPR056986">
    <property type="entry name" value="JAG1_1/2_dom"/>
</dbReference>
<dbReference type="InterPro" id="IPR026219">
    <property type="entry name" value="Jagged/Serrate"/>
</dbReference>
<dbReference type="InterPro" id="IPR049883">
    <property type="entry name" value="NOTCH1_EGF-like"/>
</dbReference>
<dbReference type="InterPro" id="IPR011651">
    <property type="entry name" value="Notch_ligand_N"/>
</dbReference>
<dbReference type="InterPro" id="IPR001007">
    <property type="entry name" value="VWF_dom"/>
</dbReference>
<dbReference type="PANTHER" id="PTHR12916">
    <property type="entry name" value="CYTOCHROME C OXIDASE POLYPEPTIDE VIC-2"/>
    <property type="match status" value="1"/>
</dbReference>
<dbReference type="PANTHER" id="PTHR12916:SF12">
    <property type="entry name" value="DELTA-LIKE PROTEIN"/>
    <property type="match status" value="1"/>
</dbReference>
<dbReference type="Pfam" id="PF01414">
    <property type="entry name" value="DSL"/>
    <property type="match status" value="1"/>
</dbReference>
<dbReference type="Pfam" id="PF00008">
    <property type="entry name" value="EGF"/>
    <property type="match status" value="9"/>
</dbReference>
<dbReference type="Pfam" id="PF07645">
    <property type="entry name" value="EGF_CA"/>
    <property type="match status" value="1"/>
</dbReference>
<dbReference type="Pfam" id="PF21700">
    <property type="entry name" value="EGF_DL_JAG"/>
    <property type="match status" value="1"/>
</dbReference>
<dbReference type="Pfam" id="PF12661">
    <property type="entry name" value="hEGF"/>
    <property type="match status" value="3"/>
</dbReference>
<dbReference type="Pfam" id="PF23575">
    <property type="entry name" value="JAG1"/>
    <property type="match status" value="1"/>
</dbReference>
<dbReference type="Pfam" id="PF07657">
    <property type="entry name" value="MNNL"/>
    <property type="match status" value="1"/>
</dbReference>
<dbReference type="PRINTS" id="PR00010">
    <property type="entry name" value="EGFBLOOD"/>
</dbReference>
<dbReference type="PRINTS" id="PR02059">
    <property type="entry name" value="JAGGEDFAMILY"/>
</dbReference>
<dbReference type="SMART" id="SM00051">
    <property type="entry name" value="DSL"/>
    <property type="match status" value="1"/>
</dbReference>
<dbReference type="SMART" id="SM00181">
    <property type="entry name" value="EGF"/>
    <property type="match status" value="16"/>
</dbReference>
<dbReference type="SMART" id="SM00179">
    <property type="entry name" value="EGF_CA"/>
    <property type="match status" value="14"/>
</dbReference>
<dbReference type="SMART" id="SM00214">
    <property type="entry name" value="VWC"/>
    <property type="match status" value="1"/>
</dbReference>
<dbReference type="SMART" id="SM00215">
    <property type="entry name" value="VWC_out"/>
    <property type="match status" value="1"/>
</dbReference>
<dbReference type="SUPFAM" id="SSF57196">
    <property type="entry name" value="EGF/Laminin"/>
    <property type="match status" value="6"/>
</dbReference>
<dbReference type="SUPFAM" id="SSF57184">
    <property type="entry name" value="Growth factor receptor domain"/>
    <property type="match status" value="2"/>
</dbReference>
<dbReference type="PROSITE" id="PS00010">
    <property type="entry name" value="ASX_HYDROXYL"/>
    <property type="match status" value="10"/>
</dbReference>
<dbReference type="PROSITE" id="PS51051">
    <property type="entry name" value="DSL"/>
    <property type="match status" value="1"/>
</dbReference>
<dbReference type="PROSITE" id="PS00022">
    <property type="entry name" value="EGF_1"/>
    <property type="match status" value="16"/>
</dbReference>
<dbReference type="PROSITE" id="PS01186">
    <property type="entry name" value="EGF_2"/>
    <property type="match status" value="12"/>
</dbReference>
<dbReference type="PROSITE" id="PS50026">
    <property type="entry name" value="EGF_3"/>
    <property type="match status" value="15"/>
</dbReference>
<dbReference type="PROSITE" id="PS01187">
    <property type="entry name" value="EGF_CA"/>
    <property type="match status" value="8"/>
</dbReference>
<dbReference type="PROSITE" id="PS50184">
    <property type="entry name" value="VWFC_2"/>
    <property type="match status" value="1"/>
</dbReference>
<accession>Q9Y219</accession>
<accession>Q9UE17</accession>
<accession>Q9UE99</accession>
<accession>Q9UNK8</accession>
<accession>Q9Y6P9</accession>
<accession>Q9Y6Q0</accession>
<protein>
    <recommendedName>
        <fullName>Protein jagged-2</fullName>
        <shortName>Jagged2</shortName>
        <shortName>hJ2</shortName>
    </recommendedName>
</protein>